<organism>
    <name type="scientific">Streptococcus pyogenes serotype M4 (strain MGAS10750)</name>
    <dbReference type="NCBI Taxonomy" id="370554"/>
    <lineage>
        <taxon>Bacteria</taxon>
        <taxon>Bacillati</taxon>
        <taxon>Bacillota</taxon>
        <taxon>Bacilli</taxon>
        <taxon>Lactobacillales</taxon>
        <taxon>Streptococcaceae</taxon>
        <taxon>Streptococcus</taxon>
    </lineage>
</organism>
<reference key="1">
    <citation type="journal article" date="2006" name="Proc. Natl. Acad. Sci. U.S.A.">
        <title>Molecular genetic anatomy of inter- and intraserotype variation in the human bacterial pathogen group A Streptococcus.</title>
        <authorList>
            <person name="Beres S.B."/>
            <person name="Richter E.W."/>
            <person name="Nagiec M.J."/>
            <person name="Sumby P."/>
            <person name="Porcella S.F."/>
            <person name="DeLeo F.R."/>
            <person name="Musser J.M."/>
        </authorList>
    </citation>
    <scope>NUCLEOTIDE SEQUENCE [LARGE SCALE GENOMIC DNA]</scope>
    <source>
        <strain>MGAS10750</strain>
    </source>
</reference>
<feature type="chain" id="PRO_0000248030" description="UPF0297 protein MGAS10750_Spy1889">
    <location>
        <begin position="1"/>
        <end position="89"/>
    </location>
</feature>
<name>Y1889_STRPF</name>
<dbReference type="EMBL" id="CP000262">
    <property type="protein sequence ID" value="ABF38839.1"/>
    <property type="molecule type" value="Genomic_DNA"/>
</dbReference>
<dbReference type="SMR" id="Q1J497"/>
<dbReference type="KEGG" id="spi:MGAS10750_Spy1889"/>
<dbReference type="HOGENOM" id="CLU_162466_0_0_9"/>
<dbReference type="Proteomes" id="UP000002434">
    <property type="component" value="Chromosome"/>
</dbReference>
<dbReference type="HAMAP" id="MF_01507">
    <property type="entry name" value="UPF0297"/>
    <property type="match status" value="1"/>
</dbReference>
<dbReference type="InterPro" id="IPR009309">
    <property type="entry name" value="IreB"/>
</dbReference>
<dbReference type="NCBIfam" id="NF003997">
    <property type="entry name" value="PRK05473.1"/>
    <property type="match status" value="1"/>
</dbReference>
<dbReference type="PANTHER" id="PTHR40067">
    <property type="entry name" value="UPF0297 PROTEIN YRZL"/>
    <property type="match status" value="1"/>
</dbReference>
<dbReference type="PANTHER" id="PTHR40067:SF1">
    <property type="entry name" value="UPF0297 PROTEIN YRZL"/>
    <property type="match status" value="1"/>
</dbReference>
<dbReference type="Pfam" id="PF06135">
    <property type="entry name" value="IreB"/>
    <property type="match status" value="1"/>
</dbReference>
<dbReference type="PIRSF" id="PIRSF037258">
    <property type="entry name" value="DUF965_bac"/>
    <property type="match status" value="1"/>
</dbReference>
<sequence>MGFTDETVRFKLDDGDKRQISETLTAVYHSLDEKGYNPINQIVGYVLSGDPAYVPRYNDARNQIRKYERDEIVEELVRYYLQGNGIDVK</sequence>
<accession>Q1J497</accession>
<protein>
    <recommendedName>
        <fullName evidence="1">UPF0297 protein MGAS10750_Spy1889</fullName>
    </recommendedName>
</protein>
<comment type="similarity">
    <text evidence="1">Belongs to the UPF0297 family.</text>
</comment>
<proteinExistence type="inferred from homology"/>
<evidence type="ECO:0000255" key="1">
    <source>
        <dbReference type="HAMAP-Rule" id="MF_01507"/>
    </source>
</evidence>
<gene>
    <name type="ordered locus">MGAS10750_Spy1889</name>
</gene>